<comment type="function">
    <text evidence="2 4 5 9 11 13">Transpeptidase that anchors surface proteins to the cell wall (Probable) (PubMed:11830639, PubMed:15718231, PubMed:24519933). Recognizes and modifies its substrate by proteolytic cleavage of a C-terminal sorting signal. Following cleavage, a covalent intermediate is formed via a thioester bond between the sortase and its substrate, which is then transferred and covalently attached to the cell wall (Probable) (PubMed:24519933). This sortase recognizes an Asn-Pro-Gln-Thr-Asn (NPQTN) motif in IsdC, which is cleaved by the sortase between the threonine and aspargine residues; may only have 1 substrate in this bacterium (Probable). May be dedicated to the process of iron acquisition during bacterial infection (Probable).</text>
</comment>
<comment type="catalytic activity">
    <reaction evidence="5 9 10">
        <text>The enzyme catalyzes a cell wall sorting reaction in which a surface protein with a sorting signal containing a NPXTN motif is cleaved between the Thr and Asn residue. The resulting threonine carboxyl end of the protein is covalently attached to a pentaglycine cross-bridge of peptidoglycan.</text>
        <dbReference type="EC" id="3.4.22.71"/>
    </reaction>
</comment>
<comment type="activity regulation">
    <text evidence="3 6">Inhibited by MTSET (2-(Trimethylammonium)-ethyl-methanethiosulfonate) and E64 ([n- (l-3-trans-carboxyoxirane-2-carbonyl)-l-leucyl]-amido(4-guanido)butane) (PubMed:14725770). Inhibited by coptisine (PubMed:29690584).</text>
</comment>
<comment type="subcellular location">
    <subcellularLocation>
        <location evidence="1">Cell membrane</location>
        <topology evidence="1">Single-pass type II membrane protein</topology>
    </subcellularLocation>
</comment>
<comment type="induction">
    <text evidence="9">Not expressed in the presence of extracellular iron, repressed by fur in the presence of iron.</text>
</comment>
<comment type="disruption phenotype">
    <text evidence="2">Loss of cell wall anchoring of IsdC (PubMed:11830639). No effect on establishment of mouse infections, however reduced bacterial persistence after 9 days infection in mice (using strain Newman, which is more pathogenic than RN4220) (PubMed:11830639).</text>
</comment>
<comment type="similarity">
    <text evidence="8">Belongs to the bacterial sortase family. Class B subfamily.</text>
</comment>
<name>SRTB_STAA8</name>
<accession>Q2FZE3</accession>
<proteinExistence type="evidence at protein level"/>
<gene>
    <name evidence="7" type="primary">srtB</name>
    <name type="ordered locus">SAOUHSC_01088</name>
</gene>
<sequence>MRMKRFLTIVQILLVVIIIIFGYKIVQTYIEDKQERANYEKLQQKFQMLMSKHQEHVRPQFESLEKINKDIVGWIKLSGTSLNYPVLQGKTNHDYLNLDFEREHRRKGSIFMDFRNELKNLNHNTILYGHHVGDNTMFDVLEDYLKQSFYEKHKIIEFDNKYGKYQLQVFSAYKTTTKDNYIRTDFENDQDYQQFLDETKRKSVINSDVNVTVKDRIMTLSTCEDAYSETTKRIVVVAKIIKVS</sequence>
<feature type="chain" id="PRO_0000445584" description="Sortase B">
    <location>
        <begin position="1"/>
        <end position="244"/>
    </location>
</feature>
<feature type="topological domain" description="Cytoplasmic" evidence="8">
    <location>
        <begin position="1"/>
        <end position="6"/>
    </location>
</feature>
<feature type="transmembrane region" description="Helical; Note=Membrane anchor" evidence="1">
    <location>
        <begin position="7"/>
        <end position="24"/>
    </location>
</feature>
<feature type="topological domain" description="Extracellular" evidence="8">
    <location>
        <begin position="25"/>
        <end position="244"/>
    </location>
</feature>
<feature type="active site" description="Acyl-thioester intermediate" evidence="10">
    <location>
        <position position="223"/>
    </location>
</feature>
<feature type="site" description="Transition state stabilizer" evidence="10 12">
    <location>
        <position position="233"/>
    </location>
</feature>
<feature type="mutagenesis site" description="Loss of transpeptidation activity." evidence="5">
    <original>H</original>
    <variation>A</variation>
    <location>
        <position position="130"/>
    </location>
</feature>
<feature type="mutagenesis site" description="Loss of transpeptidation activity." evidence="5">
    <original>C</original>
    <variation>A</variation>
    <location>
        <position position="223"/>
    </location>
</feature>
<feature type="mutagenesis site" description="Non-specific protease activity." evidence="5">
    <original>D</original>
    <variation>A</variation>
    <location>
        <position position="225"/>
    </location>
</feature>
<feature type="mutagenesis site" description="Loss of transpeptidation activity." evidence="5">
    <original>R</original>
    <variation>A</variation>
    <location>
        <position position="233"/>
    </location>
</feature>
<feature type="helix" evidence="18">
    <location>
        <begin position="31"/>
        <end position="52"/>
    </location>
</feature>
<feature type="turn" evidence="20">
    <location>
        <begin position="53"/>
        <end position="55"/>
    </location>
</feature>
<feature type="helix" evidence="18">
    <location>
        <begin position="58"/>
        <end position="65"/>
    </location>
</feature>
<feature type="strand" evidence="18">
    <location>
        <begin position="71"/>
        <end position="76"/>
    </location>
</feature>
<feature type="strand" evidence="18">
    <location>
        <begin position="83"/>
        <end position="87"/>
    </location>
</feature>
<feature type="strand" evidence="18">
    <location>
        <begin position="90"/>
        <end position="93"/>
    </location>
</feature>
<feature type="turn" evidence="18">
    <location>
        <begin position="94"/>
        <end position="96"/>
    </location>
</feature>
<feature type="strand" evidence="18">
    <location>
        <begin position="110"/>
        <end position="112"/>
    </location>
</feature>
<feature type="strand" evidence="18">
    <location>
        <begin position="118"/>
        <end position="120"/>
    </location>
</feature>
<feature type="strand" evidence="18">
    <location>
        <begin position="123"/>
        <end position="129"/>
    </location>
</feature>
<feature type="strand" evidence="18">
    <location>
        <begin position="133"/>
        <end position="135"/>
    </location>
</feature>
<feature type="helix" evidence="18">
    <location>
        <begin position="137"/>
        <end position="145"/>
    </location>
</feature>
<feature type="helix" evidence="18">
    <location>
        <begin position="147"/>
        <end position="152"/>
    </location>
</feature>
<feature type="strand" evidence="18">
    <location>
        <begin position="155"/>
        <end position="160"/>
    </location>
</feature>
<feature type="strand" evidence="18">
    <location>
        <begin position="163"/>
        <end position="178"/>
    </location>
</feature>
<feature type="helix" evidence="20">
    <location>
        <begin position="180"/>
        <end position="182"/>
    </location>
</feature>
<feature type="helix" evidence="18">
    <location>
        <begin position="189"/>
        <end position="202"/>
    </location>
</feature>
<feature type="strand" evidence="19">
    <location>
        <begin position="213"/>
        <end position="215"/>
    </location>
</feature>
<feature type="strand" evidence="18">
    <location>
        <begin position="217"/>
        <end position="222"/>
    </location>
</feature>
<feature type="turn" evidence="20">
    <location>
        <begin position="226"/>
        <end position="228"/>
    </location>
</feature>
<feature type="strand" evidence="18">
    <location>
        <begin position="232"/>
        <end position="244"/>
    </location>
</feature>
<dbReference type="EC" id="3.4.22.71" evidence="5"/>
<dbReference type="EMBL" id="CP000253">
    <property type="protein sequence ID" value="ABD30203.1"/>
    <property type="molecule type" value="Genomic_DNA"/>
</dbReference>
<dbReference type="RefSeq" id="WP_001242429.1">
    <property type="nucleotide sequence ID" value="NZ_LS483365.1"/>
</dbReference>
<dbReference type="RefSeq" id="YP_499633.1">
    <property type="nucleotide sequence ID" value="NC_007795.1"/>
</dbReference>
<dbReference type="PDB" id="1QWZ">
    <property type="method" value="X-ray"/>
    <property type="resolution" value="1.75 A"/>
    <property type="chains" value="A=31-244"/>
</dbReference>
<dbReference type="PDB" id="1QX6">
    <property type="method" value="X-ray"/>
    <property type="resolution" value="2.70 A"/>
    <property type="chains" value="A=31-244"/>
</dbReference>
<dbReference type="PDB" id="1QXA">
    <property type="method" value="X-ray"/>
    <property type="resolution" value="2.50 A"/>
    <property type="chains" value="A=31-244"/>
</dbReference>
<dbReference type="PDB" id="4LFD">
    <property type="method" value="X-ray"/>
    <property type="resolution" value="2.49 A"/>
    <property type="chains" value="A/B/C/D=31-244"/>
</dbReference>
<dbReference type="PDBsum" id="1QWZ"/>
<dbReference type="PDBsum" id="1QX6"/>
<dbReference type="PDBsum" id="1QXA"/>
<dbReference type="PDBsum" id="4LFD"/>
<dbReference type="SMR" id="Q2FZE3"/>
<dbReference type="STRING" id="93061.SAOUHSC_01088"/>
<dbReference type="BindingDB" id="Q2FZE3"/>
<dbReference type="ChEMBL" id="CHEMBL3329"/>
<dbReference type="MEROPS" id="C60.002"/>
<dbReference type="PaxDb" id="1280-SAXN108_1130"/>
<dbReference type="GeneID" id="3919249"/>
<dbReference type="KEGG" id="sao:SAOUHSC_01088"/>
<dbReference type="PATRIC" id="fig|93061.5.peg.997"/>
<dbReference type="eggNOG" id="COG4509">
    <property type="taxonomic scope" value="Bacteria"/>
</dbReference>
<dbReference type="HOGENOM" id="CLU_034078_3_0_9"/>
<dbReference type="OrthoDB" id="9806013at2"/>
<dbReference type="EvolutionaryTrace" id="Q2FZE3"/>
<dbReference type="Proteomes" id="UP000008816">
    <property type="component" value="Chromosome"/>
</dbReference>
<dbReference type="GO" id="GO:0005886">
    <property type="term" value="C:plasma membrane"/>
    <property type="evidence" value="ECO:0007669"/>
    <property type="project" value="UniProtKB-SubCell"/>
</dbReference>
<dbReference type="GO" id="GO:0016787">
    <property type="term" value="F:hydrolase activity"/>
    <property type="evidence" value="ECO:0007669"/>
    <property type="project" value="UniProtKB-KW"/>
</dbReference>
<dbReference type="CDD" id="cd05826">
    <property type="entry name" value="Sortase_B"/>
    <property type="match status" value="1"/>
</dbReference>
<dbReference type="Gene3D" id="2.40.260.10">
    <property type="entry name" value="Sortase"/>
    <property type="match status" value="1"/>
</dbReference>
<dbReference type="InterPro" id="IPR005754">
    <property type="entry name" value="Sortase"/>
</dbReference>
<dbReference type="InterPro" id="IPR023365">
    <property type="entry name" value="Sortase_dom-sf"/>
</dbReference>
<dbReference type="InterPro" id="IPR009835">
    <property type="entry name" value="SrtB"/>
</dbReference>
<dbReference type="InterPro" id="IPR015986">
    <property type="entry name" value="SrtB_Firmicute"/>
</dbReference>
<dbReference type="NCBIfam" id="TIGR03064">
    <property type="entry name" value="sortase_srtB"/>
    <property type="match status" value="1"/>
</dbReference>
<dbReference type="Pfam" id="PF04203">
    <property type="entry name" value="Sortase"/>
    <property type="match status" value="1"/>
</dbReference>
<dbReference type="PIRSF" id="PIRSF030150">
    <property type="entry name" value="UCP030150"/>
    <property type="match status" value="1"/>
</dbReference>
<dbReference type="SUPFAM" id="SSF63817">
    <property type="entry name" value="Sortase"/>
    <property type="match status" value="1"/>
</dbReference>
<keyword id="KW-0002">3D-structure</keyword>
<keyword id="KW-1003">Cell membrane</keyword>
<keyword id="KW-0378">Hydrolase</keyword>
<keyword id="KW-0472">Membrane</keyword>
<keyword id="KW-1185">Reference proteome</keyword>
<keyword id="KW-0812">Transmembrane</keyword>
<keyword id="KW-1133">Transmembrane helix</keyword>
<protein>
    <recommendedName>
        <fullName evidence="7">Sortase B</fullName>
        <ecNumber evidence="5">3.4.22.71</ecNumber>
    </recommendedName>
</protein>
<organism>
    <name type="scientific">Staphylococcus aureus (strain NCTC 8325 / PS 47)</name>
    <dbReference type="NCBI Taxonomy" id="93061"/>
    <lineage>
        <taxon>Bacteria</taxon>
        <taxon>Bacillati</taxon>
        <taxon>Bacillota</taxon>
        <taxon>Bacilli</taxon>
        <taxon>Bacillales</taxon>
        <taxon>Staphylococcaceae</taxon>
        <taxon>Staphylococcus</taxon>
    </lineage>
</organism>
<evidence type="ECO:0000255" key="1"/>
<evidence type="ECO:0000269" key="2">
    <source>
    </source>
</evidence>
<evidence type="ECO:0000269" key="3">
    <source>
    </source>
</evidence>
<evidence type="ECO:0000269" key="4">
    <source>
    </source>
</evidence>
<evidence type="ECO:0000269" key="5">
    <source>
    </source>
</evidence>
<evidence type="ECO:0000269" key="6">
    <source>
    </source>
</evidence>
<evidence type="ECO:0000303" key="7">
    <source>
    </source>
</evidence>
<evidence type="ECO:0000305" key="8"/>
<evidence type="ECO:0000305" key="9">
    <source>
    </source>
</evidence>
<evidence type="ECO:0000305" key="10">
    <source>
    </source>
</evidence>
<evidence type="ECO:0000305" key="11">
    <source>
    </source>
</evidence>
<evidence type="ECO:0000305" key="12">
    <source>
    </source>
</evidence>
<evidence type="ECO:0000305" key="13">
    <source>
    </source>
</evidence>
<evidence type="ECO:0007744" key="14">
    <source>
        <dbReference type="PDB" id="1QWZ"/>
    </source>
</evidence>
<evidence type="ECO:0007744" key="15">
    <source>
        <dbReference type="PDB" id="1QX6"/>
    </source>
</evidence>
<evidence type="ECO:0007744" key="16">
    <source>
        <dbReference type="PDB" id="1QXA"/>
    </source>
</evidence>
<evidence type="ECO:0007744" key="17">
    <source>
        <dbReference type="PDB" id="4LFD"/>
    </source>
</evidence>
<evidence type="ECO:0007829" key="18">
    <source>
        <dbReference type="PDB" id="1QWZ"/>
    </source>
</evidence>
<evidence type="ECO:0007829" key="19">
    <source>
        <dbReference type="PDB" id="1QX6"/>
    </source>
</evidence>
<evidence type="ECO:0007829" key="20">
    <source>
        <dbReference type="PDB" id="1QXA"/>
    </source>
</evidence>
<reference key="1">
    <citation type="book" date="2006" name="Gram positive pathogens, 2nd edition">
        <title>The Staphylococcus aureus NCTC 8325 genome.</title>
        <editorList>
            <person name="Fischetti V."/>
            <person name="Novick R."/>
            <person name="Ferretti J."/>
            <person name="Portnoy D."/>
            <person name="Rood J."/>
        </editorList>
        <authorList>
            <person name="Gillaspy A.F."/>
            <person name="Worrell V."/>
            <person name="Orvis J."/>
            <person name="Roe B.A."/>
            <person name="Dyer D.W."/>
            <person name="Iandolo J.J."/>
        </authorList>
    </citation>
    <scope>NUCLEOTIDE SEQUENCE [LARGE SCALE GENOMIC DNA]</scope>
    <source>
        <strain>NCTC 8325 / PS 47</strain>
    </source>
</reference>
<reference key="2">
    <citation type="journal article" date="2002" name="Proc. Natl. Acad. Sci. U.S.A.">
        <title>An iron-regulated sortase anchors a class of surface protein during Staphylococcus aureus pathogenesis.</title>
        <authorList>
            <person name="Mazmanian S.K."/>
            <person name="Ton-That H."/>
            <person name="Su K."/>
            <person name="Schneewind O."/>
        </authorList>
    </citation>
    <scope>FUNCTION</scope>
    <scope>CATALYTIC ACTIVITY</scope>
    <scope>INDUCTION</scope>
    <scope>DISRUPTION PHENOTYPE</scope>
    <source>
        <strain>Newman</strain>
        <strain>RN4220</strain>
    </source>
</reference>
<reference key="3">
    <citation type="journal article" date="2005" name="J. Biol. Chem.">
        <title>Anchor structure of staphylococcal surface proteins. V. Anchor structure of the sortase B substrate IsdC.</title>
        <authorList>
            <person name="Marraffini L.A."/>
            <person name="Schneewind O."/>
        </authorList>
    </citation>
    <scope>FUNCTION</scope>
    <source>
        <strain>RN4220</strain>
    </source>
</reference>
<reference key="4">
    <citation type="journal article" date="2018" name="Molecules">
        <title>Novel inhibitor discovery of Staphylococcus aureus sortase B and the mechanism confirmation via molecular modeling.</title>
        <authorList>
            <person name="Wang G."/>
            <person name="Wang X."/>
            <person name="Sun L."/>
            <person name="Gao Y."/>
            <person name="Niu X."/>
            <person name="Wang H."/>
        </authorList>
    </citation>
    <scope>FUNCTION</scope>
    <scope>ACTIVITY REGULATION</scope>
    <source>
        <strain>ATCC 29213 / Wichita</strain>
    </source>
</reference>
<reference evidence="14 15 16" key="5">
    <citation type="journal article" date="2004" name="Structure">
        <title>The structure of sortase B, a cysteine transpeptidase that tethers surface protein to the Staphylococcus aureus cell wall.</title>
        <authorList>
            <person name="Zong Y."/>
            <person name="Mazmanian S.K."/>
            <person name="Schneewind O."/>
            <person name="Narayana S.V."/>
        </authorList>
    </citation>
    <scope>X-RAY CRYSTALLOGRAPHY (1.75 ANGSTROMS) OF 31-244 IN COMPLEX WITH SUBSTRATE AND INHIBITORS</scope>
    <scope>ACTIVITY REGULATION</scope>
    <scope>ACTIVE SITE</scope>
    <source>
        <strain>MW2</strain>
    </source>
</reference>
<reference evidence="17" key="6">
    <citation type="journal article" date="2014" name="J. Biol. Chem.">
        <title>Structural and computational studies of the Staphylococcus aureus sortase B-substrate complex reveal a substrate-stabilized oxyanion hole.</title>
        <authorList>
            <person name="Jacobitz A.W."/>
            <person name="Wereszczynski J."/>
            <person name="Yi S.W."/>
            <person name="Amer B.R."/>
            <person name="Huang G.L."/>
            <person name="Nguyen A.V."/>
            <person name="Sawaya M.R."/>
            <person name="Jung M.E."/>
            <person name="McCammon J.A."/>
            <person name="Clubb R.T."/>
        </authorList>
    </citation>
    <scope>X-RAY CRYSTALLOGRAPHY (2.49 ANGSTROMS) OF 31-244 IN COMPLEX WITH SUBSTRATE ANALOG</scope>
    <scope>FUNCTION</scope>
    <scope>ACTIVE SITE</scope>
    <scope>REACTION MECHANISM</scope>
    <scope>MUTAGENESIS OF HIS-130; CYS-223; ASP-225 AND ARG-233</scope>
    <source>
        <strain>USA300</strain>
    </source>
</reference>